<comment type="function">
    <text evidence="2 3">Mitochondrial membrane ATP synthase (F(1)F(0) ATP synthase or Complex V) produces ATP from ADP in the presence of a proton gradient across the membrane which is generated by electron transport complexes of the respiratory chain (PubMed:25759169). F-type ATP synthases consist of two structural domains, F(1) - containing the extramembraneous catalytic core, and F(0) - containing the membrane proton channel, linked together by a central stalk and a peripheral stalk (PubMed:27373333). During catalysis, ATP synthesis in the catalytic domain of F(1) is coupled via a rotary mechanism of the central stalk subunits to proton translocation (PubMed:27373333). Part of the complex F(1) domain and the central stalk which is part of the complex rotary element (PubMed:27373333). Rotation of the central stalk against the surrounding alpha/ATP1(3)beta/ATP2(3) subunits leads to hydrolysis of ATP in three separate catalytic sites on the beta/ATP2 subunits (PubMed:27373333).</text>
</comment>
<comment type="subunit">
    <text evidence="2 3">F-type ATP synthases have 2 components, the catalytic core F(1) and the membrane-embedded component F(0), linked together by a central stalk and a peripheral stalk (PubMed:27373333). The central stalk, also called rotor shaft, is often seen as part of F(1) (PubMed:27373333). The peripheral stalk is seen as part of F(0) (PubMed:27373333). F(0) contains the membrane channel next to the rotor (PubMed:27373333). F-type ATP synthases form dimers but each monomer functions independently in ATP generation (PubMed:27373333). The dimer consists of 17 different polypeptides: ATP1 (subunit alpha, 3 molecules per monomer, part of F(1)), ATP2 (subunit beta, 3 copies per monomer, part of F(1)), ATP3 (subunit gamma, part of the central stalk), ATP4 (subunit b, part of the peripheral stalk), ATP5/OSCP (subunit 5/OSCP, part of the peripheral stalk), ATP6 (subunit a, part of the peripheral stalk), ATP7 (subunit d, part of the peripheral stalk), ATP8 (subunit 8, part of the peripheral stalk), OLI1 (subunit c, part of the rotor, 10 molecules per monomer), ATP14 (subunit h, part of the peripheral stalk), ATP15 (subunit epsilon, part of the central stalk), ATP16 (subunit delta, part of the central stalk), ATP17 (subunit f, part of the peripheral stalk), ATP18 (subunit i/j, part of the peripheral stalk), ATP19 (subunit k, dimer-specific, at interface between monomers), ATP20 (subunit g, at interface between monomers), TIM11 (subunit e, at interface between monomers) (PubMed:25759169, PubMed:27373333).</text>
</comment>
<comment type="subcellular location">
    <subcellularLocation>
        <location evidence="6">Mitochondrion inner membrane</location>
        <topology evidence="6">Peripheral membrane protein</topology>
        <orientation evidence="6">Matrix side</orientation>
    </subcellularLocation>
    <text evidence="6">The F-type ATP synthase complex is anchored in the mitochondrial inner membrane via the F(0) domain with the F(1) domain and the peripheral stalk extending into the mitochondrial matrix.</text>
</comment>
<comment type="mass spectrometry"/>
<comment type="similarity">
    <text evidence="5">Belongs to the ATPase epsilon chain family.</text>
</comment>
<comment type="sequence caution" evidence="5">
    <conflict type="erroneous gene model prediction">
        <sequence resource="EMBL-CDS" id="CAG81333"/>
    </conflict>
</comment>
<dbReference type="EMBL" id="CR382130">
    <property type="protein sequence ID" value="CAG81333.1"/>
    <property type="status" value="ALT_SEQ"/>
    <property type="molecule type" value="Genomic_DNA"/>
</dbReference>
<dbReference type="RefSeq" id="XP_503135.1">
    <property type="nucleotide sequence ID" value="XM_503135.1"/>
</dbReference>
<dbReference type="PDB" id="5FL7">
    <property type="method" value="X-ray"/>
    <property type="resolution" value="3.50 A"/>
    <property type="chains" value="H=21-162"/>
</dbReference>
<dbReference type="PDBsum" id="5FL7"/>
<dbReference type="SMR" id="Q6C877"/>
<dbReference type="FunCoup" id="Q6C877">
    <property type="interactions" value="771"/>
</dbReference>
<dbReference type="STRING" id="284591.Q6C877"/>
<dbReference type="KEGG" id="yli:2910195"/>
<dbReference type="HOGENOM" id="CLU_084338_0_1_1"/>
<dbReference type="InParanoid" id="Q6C877"/>
<dbReference type="OrthoDB" id="117486at4891"/>
<dbReference type="Proteomes" id="UP000001300">
    <property type="component" value="Chromosome D"/>
</dbReference>
<dbReference type="GO" id="GO:0005743">
    <property type="term" value="C:mitochondrial inner membrane"/>
    <property type="evidence" value="ECO:0007669"/>
    <property type="project" value="UniProtKB-SubCell"/>
</dbReference>
<dbReference type="GO" id="GO:0045259">
    <property type="term" value="C:proton-transporting ATP synthase complex"/>
    <property type="evidence" value="ECO:0007669"/>
    <property type="project" value="UniProtKB-KW"/>
</dbReference>
<dbReference type="GO" id="GO:0046933">
    <property type="term" value="F:proton-transporting ATP synthase activity, rotational mechanism"/>
    <property type="evidence" value="ECO:0007669"/>
    <property type="project" value="InterPro"/>
</dbReference>
<dbReference type="GO" id="GO:0015986">
    <property type="term" value="P:proton motive force-driven ATP synthesis"/>
    <property type="evidence" value="ECO:0000318"/>
    <property type="project" value="GO_Central"/>
</dbReference>
<dbReference type="CDD" id="cd12152">
    <property type="entry name" value="F1-ATPase_delta"/>
    <property type="match status" value="1"/>
</dbReference>
<dbReference type="FunFam" id="2.60.15.10:FF:000003">
    <property type="entry name" value="ATP synthase subunit delta, mitochondrial"/>
    <property type="match status" value="1"/>
</dbReference>
<dbReference type="Gene3D" id="6.10.140.880">
    <property type="match status" value="1"/>
</dbReference>
<dbReference type="Gene3D" id="2.60.15.10">
    <property type="entry name" value="F0F1 ATP synthase delta/epsilon subunit, N-terminal"/>
    <property type="match status" value="1"/>
</dbReference>
<dbReference type="HAMAP" id="MF_00530">
    <property type="entry name" value="ATP_synth_epsil_bac"/>
    <property type="match status" value="1"/>
</dbReference>
<dbReference type="InterPro" id="IPR001469">
    <property type="entry name" value="ATP_synth_F1_dsu/esu"/>
</dbReference>
<dbReference type="InterPro" id="IPR020546">
    <property type="entry name" value="ATP_synth_F1_dsu/esu_N"/>
</dbReference>
<dbReference type="InterPro" id="IPR048938">
    <property type="entry name" value="ATPD_C_fung"/>
</dbReference>
<dbReference type="InterPro" id="IPR036771">
    <property type="entry name" value="ATPsynth_dsu/esu_N"/>
</dbReference>
<dbReference type="NCBIfam" id="TIGR01216">
    <property type="entry name" value="ATP_synt_epsi"/>
    <property type="match status" value="1"/>
</dbReference>
<dbReference type="PANTHER" id="PTHR13822">
    <property type="entry name" value="ATP SYNTHASE DELTA/EPSILON CHAIN"/>
    <property type="match status" value="1"/>
</dbReference>
<dbReference type="PANTHER" id="PTHR13822:SF7">
    <property type="entry name" value="ATP SYNTHASE SUBUNIT DELTA, MITOCHONDRIAL"/>
    <property type="match status" value="1"/>
</dbReference>
<dbReference type="Pfam" id="PF02823">
    <property type="entry name" value="ATP-synt_DE_N"/>
    <property type="match status" value="1"/>
</dbReference>
<dbReference type="Pfam" id="PF21334">
    <property type="entry name" value="ATPD_C_fung"/>
    <property type="match status" value="1"/>
</dbReference>
<dbReference type="SUPFAM" id="SSF51344">
    <property type="entry name" value="Epsilon subunit of F1F0-ATP synthase N-terminal domain"/>
    <property type="match status" value="1"/>
</dbReference>
<reference evidence="5" key="1">
    <citation type="journal article" date="2015" name="Biochem. J.">
        <title>The purification and characterization of ATP synthase complexes from the mitochondria of four fungal species.</title>
        <authorList>
            <person name="Liu S."/>
            <person name="Charlesworth T.J."/>
            <person name="Bason J.V."/>
            <person name="Montgomery M.G."/>
            <person name="Harbour M.E."/>
            <person name="Fearnley I.M."/>
            <person name="Walker J.E."/>
        </authorList>
    </citation>
    <scope>NUCLEOTIDE SEQUENCE [GENOMIC DNA]</scope>
    <scope>PROTEIN SEQUENCE OF 25-34</scope>
    <scope>IDENTIFICATION IN ATP SYNTHASE COMPLEX</scope>
    <scope>FUNCTION OF ATP SYNTHASE COMPLEX</scope>
    <scope>SUBUNIT</scope>
    <scope>SUBCELLULAR LOCATION</scope>
    <scope>MASS SPECTROMETRY</scope>
    <scope>IDENTIFICATION BY MASS SPECTROMETRY</scope>
    <source>
        <strain evidence="4">CLIB 122 / E 150</strain>
    </source>
</reference>
<reference evidence="8" key="2">
    <citation type="journal article" date="2004" name="Nature">
        <title>Genome evolution in yeasts.</title>
        <authorList>
            <person name="Dujon B."/>
            <person name="Sherman D."/>
            <person name="Fischer G."/>
            <person name="Durrens P."/>
            <person name="Casaregola S."/>
            <person name="Lafontaine I."/>
            <person name="de Montigny J."/>
            <person name="Marck C."/>
            <person name="Neuveglise C."/>
            <person name="Talla E."/>
            <person name="Goffard N."/>
            <person name="Frangeul L."/>
            <person name="Aigle M."/>
            <person name="Anthouard V."/>
            <person name="Babour A."/>
            <person name="Barbe V."/>
            <person name="Barnay S."/>
            <person name="Blanchin S."/>
            <person name="Beckerich J.-M."/>
            <person name="Beyne E."/>
            <person name="Bleykasten C."/>
            <person name="Boisrame A."/>
            <person name="Boyer J."/>
            <person name="Cattolico L."/>
            <person name="Confanioleri F."/>
            <person name="de Daruvar A."/>
            <person name="Despons L."/>
            <person name="Fabre E."/>
            <person name="Fairhead C."/>
            <person name="Ferry-Dumazet H."/>
            <person name="Groppi A."/>
            <person name="Hantraye F."/>
            <person name="Hennequin C."/>
            <person name="Jauniaux N."/>
            <person name="Joyet P."/>
            <person name="Kachouri R."/>
            <person name="Kerrest A."/>
            <person name="Koszul R."/>
            <person name="Lemaire M."/>
            <person name="Lesur I."/>
            <person name="Ma L."/>
            <person name="Muller H."/>
            <person name="Nicaud J.-M."/>
            <person name="Nikolski M."/>
            <person name="Oztas S."/>
            <person name="Ozier-Kalogeropoulos O."/>
            <person name="Pellenz S."/>
            <person name="Potier S."/>
            <person name="Richard G.-F."/>
            <person name="Straub M.-L."/>
            <person name="Suleau A."/>
            <person name="Swennen D."/>
            <person name="Tekaia F."/>
            <person name="Wesolowski-Louvel M."/>
            <person name="Westhof E."/>
            <person name="Wirth B."/>
            <person name="Zeniou-Meyer M."/>
            <person name="Zivanovic Y."/>
            <person name="Bolotin-Fukuhara M."/>
            <person name="Thierry A."/>
            <person name="Bouchier C."/>
            <person name="Caudron B."/>
            <person name="Scarpelli C."/>
            <person name="Gaillardin C."/>
            <person name="Weissenbach J."/>
            <person name="Wincker P."/>
            <person name="Souciet J.-L."/>
        </authorList>
    </citation>
    <scope>NUCLEOTIDE SEQUENCE [LARGE SCALE GENOMIC DNA]</scope>
    <source>
        <strain>CLIB 122 / E 150</strain>
    </source>
</reference>
<reference evidence="5" key="3">
    <citation type="journal article" date="2016" name="Mol. Cell">
        <title>Structure of a Complete ATP Synthase Dimer Reveals the Molecular Basis of Inner Mitochondrial Membrane Morphology.</title>
        <authorList>
            <person name="Hahn A."/>
            <person name="Parey K."/>
            <person name="Bublitz M."/>
            <person name="Mills D.J."/>
            <person name="Zickermann V."/>
            <person name="Vonck J."/>
            <person name="Kuehlbrandt W."/>
            <person name="Meier T."/>
        </authorList>
    </citation>
    <scope>X-RAY CRYSTALLOGRAPHY (3.5 ANGSTROMS) OF ATP SYNTHASE F1C10 COMPLEX</scope>
    <scope>STRUCTURE BY ELECTRON MICROSCOPY (7.7 ANGSTROMS) OF DIMERIC ATP SYNTHASE COMPLEX</scope>
    <scope>FUNCTION</scope>
    <scope>SUBUNIT</scope>
    <scope>SUBCELLULAR LOCATION</scope>
</reference>
<protein>
    <recommendedName>
        <fullName evidence="1">ATP synthase subunit delta, mitochondrial</fullName>
    </recommendedName>
    <alternativeName>
        <fullName evidence="1">F-ATPase delta subunit</fullName>
    </alternativeName>
</protein>
<name>ATPD_YARLI</name>
<evidence type="ECO:0000250" key="1">
    <source>
        <dbReference type="UniProtKB" id="Q12165"/>
    </source>
</evidence>
<evidence type="ECO:0000269" key="2">
    <source>
    </source>
</evidence>
<evidence type="ECO:0000269" key="3">
    <source>
    </source>
</evidence>
<evidence type="ECO:0000303" key="4">
    <source>
    </source>
</evidence>
<evidence type="ECO:0000305" key="5"/>
<evidence type="ECO:0000305" key="6">
    <source>
    </source>
</evidence>
<evidence type="ECO:0000312" key="7">
    <source>
        <dbReference type="EMBL" id="CAG81333.1"/>
    </source>
</evidence>
<evidence type="ECO:0000312" key="8">
    <source>
        <dbReference type="Proteomes" id="UP000001300"/>
    </source>
</evidence>
<evidence type="ECO:0007829" key="9">
    <source>
        <dbReference type="PDB" id="5FL7"/>
    </source>
</evidence>
<accession>Q6C877</accession>
<keyword id="KW-0002">3D-structure</keyword>
<keyword id="KW-0066">ATP synthesis</keyword>
<keyword id="KW-0139">CF(1)</keyword>
<keyword id="KW-0903">Direct protein sequencing</keyword>
<keyword id="KW-0375">Hydrogen ion transport</keyword>
<keyword id="KW-0406">Ion transport</keyword>
<keyword id="KW-0472">Membrane</keyword>
<keyword id="KW-0496">Mitochondrion</keyword>
<keyword id="KW-0999">Mitochondrion inner membrane</keyword>
<keyword id="KW-1185">Reference proteome</keyword>
<keyword id="KW-0809">Transit peptide</keyword>
<keyword id="KW-0813">Transport</keyword>
<gene>
    <name evidence="1" type="primary">ATP16</name>
    <name evidence="7" type="ordered locus">YALI0_D22022g</name>
</gene>
<proteinExistence type="evidence at protein level"/>
<organism evidence="8">
    <name type="scientific">Yarrowia lipolytica (strain CLIB 122 / E 150)</name>
    <name type="common">Yeast</name>
    <name type="synonym">Candida lipolytica</name>
    <dbReference type="NCBI Taxonomy" id="284591"/>
    <lineage>
        <taxon>Eukaryota</taxon>
        <taxon>Fungi</taxon>
        <taxon>Dikarya</taxon>
        <taxon>Ascomycota</taxon>
        <taxon>Saccharomycotina</taxon>
        <taxon>Dipodascomycetes</taxon>
        <taxon>Dipodascales</taxon>
        <taxon>Dipodascales incertae sedis</taxon>
        <taxon>Yarrowia</taxon>
    </lineage>
</organism>
<sequence>MFSVARTAIRGAARPAVRIARRGYAETASVDKLRLTLALPHQSIYNQKEVTQVNIPSTAGELGILANHVPTIQQLKPGVVEVIETNGETKSYFISGGFATVQPDSELSVNSIEAFQAEDFSPEAIKSLTAEAQKNAQSADEAVAAEAEIELEVLEALAHFAK</sequence>
<feature type="transit peptide" description="Mitochondrion" evidence="2">
    <location>
        <begin position="1"/>
        <end position="24"/>
    </location>
</feature>
<feature type="chain" id="PRO_0000445314" description="ATP synthase subunit delta, mitochondrial" evidence="5">
    <location>
        <begin position="25"/>
        <end position="162"/>
    </location>
</feature>
<feature type="strand" evidence="9">
    <location>
        <begin position="47"/>
        <end position="49"/>
    </location>
</feature>
<feature type="strand" evidence="9">
    <location>
        <begin position="52"/>
        <end position="57"/>
    </location>
</feature>
<feature type="strand" evidence="9">
    <location>
        <begin position="60"/>
        <end position="64"/>
    </location>
</feature>
<feature type="strand" evidence="9">
    <location>
        <begin position="77"/>
        <end position="83"/>
    </location>
</feature>
<feature type="helix" evidence="9">
    <location>
        <begin position="85"/>
        <end position="87"/>
    </location>
</feature>
<feature type="strand" evidence="9">
    <location>
        <begin position="89"/>
        <end position="96"/>
    </location>
</feature>
<feature type="turn" evidence="9">
    <location>
        <begin position="103"/>
        <end position="105"/>
    </location>
</feature>
<feature type="helix" evidence="9">
    <location>
        <begin position="127"/>
        <end position="137"/>
    </location>
</feature>
<feature type="helix" evidence="9">
    <location>
        <begin position="145"/>
        <end position="152"/>
    </location>
</feature>
<feature type="strand" evidence="9">
    <location>
        <begin position="154"/>
        <end position="156"/>
    </location>
</feature>